<name>TRPA_LEPBL</name>
<keyword id="KW-0028">Amino-acid biosynthesis</keyword>
<keyword id="KW-0057">Aromatic amino acid biosynthesis</keyword>
<keyword id="KW-0456">Lyase</keyword>
<keyword id="KW-0822">Tryptophan biosynthesis</keyword>
<feature type="chain" id="PRO_1000018224" description="Tryptophan synthase alpha chain">
    <location>
        <begin position="1"/>
        <end position="264"/>
    </location>
</feature>
<feature type="active site" description="Proton acceptor" evidence="1">
    <location>
        <position position="45"/>
    </location>
</feature>
<feature type="active site" description="Proton acceptor" evidence="1">
    <location>
        <position position="56"/>
    </location>
</feature>
<organism>
    <name type="scientific">Leptospira borgpetersenii serovar Hardjo-bovis (strain L550)</name>
    <dbReference type="NCBI Taxonomy" id="355276"/>
    <lineage>
        <taxon>Bacteria</taxon>
        <taxon>Pseudomonadati</taxon>
        <taxon>Spirochaetota</taxon>
        <taxon>Spirochaetia</taxon>
        <taxon>Leptospirales</taxon>
        <taxon>Leptospiraceae</taxon>
        <taxon>Leptospira</taxon>
    </lineage>
</organism>
<sequence>MSAISSVFSSDKSVFIPYISLGDPDYESCISWADALIRGGAGILELGIPFSDPVADGPVIQKAFKRALAYPFSMKKILEITAEIHKLHPETPLVYLTYFNPLYSMGLEAFTESAKNSGIQGLIIPDLPFDTSEAEEFFSQLERKKIDFIHLVTPATTIDRIQSMKSFASGFIYYVTSYGVTGERRALAVGLKERIQMVRNKVGLPVCAGFGISTADQAKEISTYANGVIIGSAVQKIIEESGSNREVCISKLFTYASEIRASMK</sequence>
<protein>
    <recommendedName>
        <fullName evidence="1">Tryptophan synthase alpha chain</fullName>
        <ecNumber evidence="1">4.2.1.20</ecNumber>
    </recommendedName>
</protein>
<dbReference type="EC" id="4.2.1.20" evidence="1"/>
<dbReference type="EMBL" id="CP000348">
    <property type="protein sequence ID" value="ABJ78470.1"/>
    <property type="molecule type" value="Genomic_DNA"/>
</dbReference>
<dbReference type="RefSeq" id="WP_002727293.1">
    <property type="nucleotide sequence ID" value="NC_008508.1"/>
</dbReference>
<dbReference type="SMR" id="Q053M5"/>
<dbReference type="GeneID" id="61173539"/>
<dbReference type="KEGG" id="lbl:LBL_0929"/>
<dbReference type="HOGENOM" id="CLU_016734_0_0_12"/>
<dbReference type="UniPathway" id="UPA00035">
    <property type="reaction ID" value="UER00044"/>
</dbReference>
<dbReference type="GO" id="GO:0005829">
    <property type="term" value="C:cytosol"/>
    <property type="evidence" value="ECO:0007669"/>
    <property type="project" value="TreeGrafter"/>
</dbReference>
<dbReference type="GO" id="GO:0004834">
    <property type="term" value="F:tryptophan synthase activity"/>
    <property type="evidence" value="ECO:0007669"/>
    <property type="project" value="UniProtKB-UniRule"/>
</dbReference>
<dbReference type="CDD" id="cd04724">
    <property type="entry name" value="Tryptophan_synthase_alpha"/>
    <property type="match status" value="1"/>
</dbReference>
<dbReference type="FunFam" id="3.20.20.70:FF:000037">
    <property type="entry name" value="Tryptophan synthase alpha chain"/>
    <property type="match status" value="1"/>
</dbReference>
<dbReference type="Gene3D" id="3.20.20.70">
    <property type="entry name" value="Aldolase class I"/>
    <property type="match status" value="1"/>
</dbReference>
<dbReference type="HAMAP" id="MF_00131">
    <property type="entry name" value="Trp_synth_alpha"/>
    <property type="match status" value="1"/>
</dbReference>
<dbReference type="InterPro" id="IPR013785">
    <property type="entry name" value="Aldolase_TIM"/>
</dbReference>
<dbReference type="InterPro" id="IPR011060">
    <property type="entry name" value="RibuloseP-bd_barrel"/>
</dbReference>
<dbReference type="InterPro" id="IPR018204">
    <property type="entry name" value="Trp_synthase_alpha_AS"/>
</dbReference>
<dbReference type="InterPro" id="IPR002028">
    <property type="entry name" value="Trp_synthase_suA"/>
</dbReference>
<dbReference type="NCBIfam" id="TIGR00262">
    <property type="entry name" value="trpA"/>
    <property type="match status" value="1"/>
</dbReference>
<dbReference type="PANTHER" id="PTHR43406:SF1">
    <property type="entry name" value="TRYPTOPHAN SYNTHASE ALPHA CHAIN, CHLOROPLASTIC"/>
    <property type="match status" value="1"/>
</dbReference>
<dbReference type="PANTHER" id="PTHR43406">
    <property type="entry name" value="TRYPTOPHAN SYNTHASE, ALPHA CHAIN"/>
    <property type="match status" value="1"/>
</dbReference>
<dbReference type="Pfam" id="PF00290">
    <property type="entry name" value="Trp_syntA"/>
    <property type="match status" value="1"/>
</dbReference>
<dbReference type="SUPFAM" id="SSF51366">
    <property type="entry name" value="Ribulose-phoshate binding barrel"/>
    <property type="match status" value="1"/>
</dbReference>
<dbReference type="PROSITE" id="PS00167">
    <property type="entry name" value="TRP_SYNTHASE_ALPHA"/>
    <property type="match status" value="1"/>
</dbReference>
<reference key="1">
    <citation type="journal article" date="2006" name="Proc. Natl. Acad. Sci. U.S.A.">
        <title>Genome reduction in Leptospira borgpetersenii reflects limited transmission potential.</title>
        <authorList>
            <person name="Bulach D.M."/>
            <person name="Zuerner R.L."/>
            <person name="Wilson P."/>
            <person name="Seemann T."/>
            <person name="McGrath A."/>
            <person name="Cullen P.A."/>
            <person name="Davis J."/>
            <person name="Johnson M."/>
            <person name="Kuczek E."/>
            <person name="Alt D.P."/>
            <person name="Peterson-Burch B."/>
            <person name="Coppel R.L."/>
            <person name="Rood J.I."/>
            <person name="Davies J.K."/>
            <person name="Adler B."/>
        </authorList>
    </citation>
    <scope>NUCLEOTIDE SEQUENCE [LARGE SCALE GENOMIC DNA]</scope>
    <source>
        <strain>L550</strain>
    </source>
</reference>
<proteinExistence type="inferred from homology"/>
<accession>Q053M5</accession>
<comment type="function">
    <text evidence="1">The alpha subunit is responsible for the aldol cleavage of indoleglycerol phosphate to indole and glyceraldehyde 3-phosphate.</text>
</comment>
<comment type="catalytic activity">
    <reaction evidence="1">
        <text>(1S,2R)-1-C-(indol-3-yl)glycerol 3-phosphate + L-serine = D-glyceraldehyde 3-phosphate + L-tryptophan + H2O</text>
        <dbReference type="Rhea" id="RHEA:10532"/>
        <dbReference type="ChEBI" id="CHEBI:15377"/>
        <dbReference type="ChEBI" id="CHEBI:33384"/>
        <dbReference type="ChEBI" id="CHEBI:57912"/>
        <dbReference type="ChEBI" id="CHEBI:58866"/>
        <dbReference type="ChEBI" id="CHEBI:59776"/>
        <dbReference type="EC" id="4.2.1.20"/>
    </reaction>
</comment>
<comment type="pathway">
    <text evidence="1">Amino-acid biosynthesis; L-tryptophan biosynthesis; L-tryptophan from chorismate: step 5/5.</text>
</comment>
<comment type="subunit">
    <text evidence="1">Tetramer of two alpha and two beta chains.</text>
</comment>
<comment type="similarity">
    <text evidence="1">Belongs to the TrpA family.</text>
</comment>
<evidence type="ECO:0000255" key="1">
    <source>
        <dbReference type="HAMAP-Rule" id="MF_00131"/>
    </source>
</evidence>
<gene>
    <name evidence="1" type="primary">trpA</name>
    <name type="ordered locus">LBL_0929</name>
</gene>